<keyword id="KW-0507">mRNA processing</keyword>
<keyword id="KW-0508">mRNA splicing</keyword>
<keyword id="KW-0539">Nucleus</keyword>
<keyword id="KW-1185">Reference proteome</keyword>
<sequence>MNQANVKNTTFHSMTSVSYNLSPYCSTGTTFRKQPLYRIWETESSTSADLSQKLNYMFPKLGLSESQTSLKDKDVTKDVVCQDIHWSVDATSLFTINSDYGIRQYLIPDPKSDQTLLNPYSRIFAHESVLSSDISPRYSLYEGSSEPLANSILIGAKNVPIKLVDLNDTNNLSTIRSYDISNLENEKFETPYVLKYHRESLFLSGTVRNKVNVYDVNRREPVNTLTYSRRSKCGTQSYKSIISCLDDSFSDNQVRYCGSYKNQVFIIDLRGKTLQLLNNLQGNGARGCYQIINSDNGSYLYVLQRYSSRIEILDHRRPDRPVNHLELPGRSDFQKLKACYNGSFQVGSPLGKGQILSWDKSTIESGGITRENQVVQCQPDILYNVPQCKSMRINIIKTSSDATAISYSGDTAGIALLQR</sequence>
<feature type="chain" id="PRO_0000405683" description="Protein SWT21">
    <location>
        <begin position="1"/>
        <end position="419"/>
    </location>
</feature>
<name>SWT21_CANGA</name>
<dbReference type="EMBL" id="CR380956">
    <property type="protein sequence ID" value="CAG61159.1"/>
    <property type="molecule type" value="Genomic_DNA"/>
</dbReference>
<dbReference type="RefSeq" id="XP_448208.1">
    <property type="nucleotide sequence ID" value="XM_448208.1"/>
</dbReference>
<dbReference type="SMR" id="Q6FNI6"/>
<dbReference type="FunCoup" id="Q6FNI6">
    <property type="interactions" value="33"/>
</dbReference>
<dbReference type="STRING" id="284593.Q6FNI6"/>
<dbReference type="EnsemblFungi" id="CAGL0J11396g-T">
    <property type="protein sequence ID" value="CAGL0J11396g-T-p1"/>
    <property type="gene ID" value="CAGL0J11396g"/>
</dbReference>
<dbReference type="KEGG" id="cgr:2889524"/>
<dbReference type="CGD" id="CAL0133758">
    <property type="gene designation" value="CAGL0J11396g"/>
</dbReference>
<dbReference type="VEuPathDB" id="FungiDB:CAGL0J11396g"/>
<dbReference type="eggNOG" id="ENOG502QVPI">
    <property type="taxonomic scope" value="Eukaryota"/>
</dbReference>
<dbReference type="HOGENOM" id="CLU_662333_0_0_1"/>
<dbReference type="InParanoid" id="Q6FNI6"/>
<dbReference type="OMA" id="VICQDIF"/>
<dbReference type="Proteomes" id="UP000002428">
    <property type="component" value="Chromosome J"/>
</dbReference>
<dbReference type="GO" id="GO:0005634">
    <property type="term" value="C:nucleus"/>
    <property type="evidence" value="ECO:0007669"/>
    <property type="project" value="UniProtKB-SubCell"/>
</dbReference>
<dbReference type="GO" id="GO:0006397">
    <property type="term" value="P:mRNA processing"/>
    <property type="evidence" value="ECO:0007669"/>
    <property type="project" value="UniProtKB-KW"/>
</dbReference>
<dbReference type="GO" id="GO:0008380">
    <property type="term" value="P:RNA splicing"/>
    <property type="evidence" value="ECO:0007669"/>
    <property type="project" value="UniProtKB-KW"/>
</dbReference>
<dbReference type="Gene3D" id="2.130.10.10">
    <property type="entry name" value="YVTN repeat-like/Quinoprotein amine dehydrogenase"/>
    <property type="match status" value="1"/>
</dbReference>
<dbReference type="InterPro" id="IPR051150">
    <property type="entry name" value="SWT21/TCAB1_mRNA_Telomere"/>
</dbReference>
<dbReference type="InterPro" id="IPR015943">
    <property type="entry name" value="WD40/YVTN_repeat-like_dom_sf"/>
</dbReference>
<dbReference type="InterPro" id="IPR036322">
    <property type="entry name" value="WD40_repeat_dom_sf"/>
</dbReference>
<dbReference type="PANTHER" id="PTHR13211">
    <property type="entry name" value="TELOMERASE CAJAL BODY PROTEIN 1"/>
    <property type="match status" value="1"/>
</dbReference>
<dbReference type="PANTHER" id="PTHR13211:SF0">
    <property type="entry name" value="TELOMERASE CAJAL BODY PROTEIN 1"/>
    <property type="match status" value="1"/>
</dbReference>
<dbReference type="SUPFAM" id="SSF50978">
    <property type="entry name" value="WD40 repeat-like"/>
    <property type="match status" value="1"/>
</dbReference>
<protein>
    <recommendedName>
        <fullName>Protein SWT21</fullName>
    </recommendedName>
</protein>
<comment type="function">
    <text evidence="1">Involved in mRNA splicing. Helps to stabilize the U1 snRNP-5' splice site interaction (By similarity).</text>
</comment>
<comment type="subunit">
    <text evidence="1">Associates with snRNPs.</text>
</comment>
<comment type="subcellular location">
    <subcellularLocation>
        <location evidence="1">Nucleus</location>
    </subcellularLocation>
</comment>
<comment type="similarity">
    <text evidence="2">Belongs to the SWT21 family.</text>
</comment>
<accession>Q6FNI6</accession>
<gene>
    <name type="primary">SWT21</name>
    <name type="ordered locus">CAGL0J11396g</name>
</gene>
<evidence type="ECO:0000250" key="1"/>
<evidence type="ECO:0000305" key="2"/>
<proteinExistence type="inferred from homology"/>
<reference key="1">
    <citation type="journal article" date="2004" name="Nature">
        <title>Genome evolution in yeasts.</title>
        <authorList>
            <person name="Dujon B."/>
            <person name="Sherman D."/>
            <person name="Fischer G."/>
            <person name="Durrens P."/>
            <person name="Casaregola S."/>
            <person name="Lafontaine I."/>
            <person name="de Montigny J."/>
            <person name="Marck C."/>
            <person name="Neuveglise C."/>
            <person name="Talla E."/>
            <person name="Goffard N."/>
            <person name="Frangeul L."/>
            <person name="Aigle M."/>
            <person name="Anthouard V."/>
            <person name="Babour A."/>
            <person name="Barbe V."/>
            <person name="Barnay S."/>
            <person name="Blanchin S."/>
            <person name="Beckerich J.-M."/>
            <person name="Beyne E."/>
            <person name="Bleykasten C."/>
            <person name="Boisrame A."/>
            <person name="Boyer J."/>
            <person name="Cattolico L."/>
            <person name="Confanioleri F."/>
            <person name="de Daruvar A."/>
            <person name="Despons L."/>
            <person name="Fabre E."/>
            <person name="Fairhead C."/>
            <person name="Ferry-Dumazet H."/>
            <person name="Groppi A."/>
            <person name="Hantraye F."/>
            <person name="Hennequin C."/>
            <person name="Jauniaux N."/>
            <person name="Joyet P."/>
            <person name="Kachouri R."/>
            <person name="Kerrest A."/>
            <person name="Koszul R."/>
            <person name="Lemaire M."/>
            <person name="Lesur I."/>
            <person name="Ma L."/>
            <person name="Muller H."/>
            <person name="Nicaud J.-M."/>
            <person name="Nikolski M."/>
            <person name="Oztas S."/>
            <person name="Ozier-Kalogeropoulos O."/>
            <person name="Pellenz S."/>
            <person name="Potier S."/>
            <person name="Richard G.-F."/>
            <person name="Straub M.-L."/>
            <person name="Suleau A."/>
            <person name="Swennen D."/>
            <person name="Tekaia F."/>
            <person name="Wesolowski-Louvel M."/>
            <person name="Westhof E."/>
            <person name="Wirth B."/>
            <person name="Zeniou-Meyer M."/>
            <person name="Zivanovic Y."/>
            <person name="Bolotin-Fukuhara M."/>
            <person name="Thierry A."/>
            <person name="Bouchier C."/>
            <person name="Caudron B."/>
            <person name="Scarpelli C."/>
            <person name="Gaillardin C."/>
            <person name="Weissenbach J."/>
            <person name="Wincker P."/>
            <person name="Souciet J.-L."/>
        </authorList>
    </citation>
    <scope>NUCLEOTIDE SEQUENCE [LARGE SCALE GENOMIC DNA]</scope>
    <source>
        <strain>ATCC 2001 / BCRC 20586 / JCM 3761 / NBRC 0622 / NRRL Y-65 / CBS 138</strain>
    </source>
</reference>
<organism>
    <name type="scientific">Candida glabrata (strain ATCC 2001 / BCRC 20586 / JCM 3761 / NBRC 0622 / NRRL Y-65 / CBS 138)</name>
    <name type="common">Yeast</name>
    <name type="synonym">Nakaseomyces glabratus</name>
    <dbReference type="NCBI Taxonomy" id="284593"/>
    <lineage>
        <taxon>Eukaryota</taxon>
        <taxon>Fungi</taxon>
        <taxon>Dikarya</taxon>
        <taxon>Ascomycota</taxon>
        <taxon>Saccharomycotina</taxon>
        <taxon>Saccharomycetes</taxon>
        <taxon>Saccharomycetales</taxon>
        <taxon>Saccharomycetaceae</taxon>
        <taxon>Nakaseomyces</taxon>
    </lineage>
</organism>